<proteinExistence type="inferred from homology"/>
<feature type="chain" id="PRO_1000147851" description="Mlc titration factor A">
    <location>
        <begin position="1"/>
        <end position="270"/>
    </location>
</feature>
<feature type="binding site" evidence="1">
    <location>
        <position position="111"/>
    </location>
    <ligand>
        <name>Zn(2+)</name>
        <dbReference type="ChEBI" id="CHEBI:29105"/>
    </ligand>
</feature>
<feature type="binding site" evidence="1">
    <location>
        <position position="148"/>
    </location>
    <ligand>
        <name>Zn(2+)</name>
        <dbReference type="ChEBI" id="CHEBI:29105"/>
    </ligand>
</feature>
<feature type="binding site" evidence="1">
    <location>
        <position position="152"/>
    </location>
    <ligand>
        <name>Zn(2+)</name>
        <dbReference type="ChEBI" id="CHEBI:29105"/>
    </ligand>
</feature>
<feature type="binding site" evidence="1">
    <location>
        <position position="211"/>
    </location>
    <ligand>
        <name>Zn(2+)</name>
        <dbReference type="ChEBI" id="CHEBI:29105"/>
    </ligand>
</feature>
<comment type="function">
    <text evidence="1">Involved in the modulation of the activity of the glucose-phosphotransferase system (glucose-PTS). Interacts with the transcriptional repressor Mlc, preventing its interaction with DNA and leading to the modulation of expression of genes regulated by Mlc, including ptsG, which encodes the PTS system glucose-specific EIICB component.</text>
</comment>
<comment type="function">
    <text evidence="1">Shows zinc-dependent metallopeptidase activity.</text>
</comment>
<comment type="cofactor">
    <cofactor evidence="1">
        <name>Zn(2+)</name>
        <dbReference type="ChEBI" id="CHEBI:29105"/>
    </cofactor>
    <text evidence="1">Binds 1 zinc ion per subunit.</text>
</comment>
<comment type="subunit">
    <text evidence="1">Interacts with Mlc.</text>
</comment>
<comment type="subcellular location">
    <subcellularLocation>
        <location evidence="1">Cytoplasm</location>
    </subcellularLocation>
</comment>
<comment type="similarity">
    <text evidence="1">Belongs to the MtfA family.</text>
</comment>
<name>MTFA_YERPY</name>
<protein>
    <recommendedName>
        <fullName evidence="1">Mlc titration factor A</fullName>
    </recommendedName>
    <alternativeName>
        <fullName evidence="1">Probable zinc metallopeptidase MtfA</fullName>
        <ecNumber evidence="1">3.4.11.-</ecNumber>
    </alternativeName>
</protein>
<gene>
    <name evidence="1" type="primary">mtfA</name>
    <name type="ordered locus">YPK_2490</name>
</gene>
<dbReference type="EC" id="3.4.11.-" evidence="1"/>
<dbReference type="EMBL" id="CP000950">
    <property type="protein sequence ID" value="ACA68767.1"/>
    <property type="molecule type" value="Genomic_DNA"/>
</dbReference>
<dbReference type="RefSeq" id="WP_002211042.1">
    <property type="nucleotide sequence ID" value="NZ_CP009792.1"/>
</dbReference>
<dbReference type="SMR" id="B1JPS4"/>
<dbReference type="GeneID" id="57976845"/>
<dbReference type="KEGG" id="ypy:YPK_2490"/>
<dbReference type="PATRIC" id="fig|502800.11.peg.3181"/>
<dbReference type="GO" id="GO:0005829">
    <property type="term" value="C:cytosol"/>
    <property type="evidence" value="ECO:0007669"/>
    <property type="project" value="TreeGrafter"/>
</dbReference>
<dbReference type="GO" id="GO:0004177">
    <property type="term" value="F:aminopeptidase activity"/>
    <property type="evidence" value="ECO:0007669"/>
    <property type="project" value="UniProtKB-UniRule"/>
</dbReference>
<dbReference type="GO" id="GO:0008237">
    <property type="term" value="F:metallopeptidase activity"/>
    <property type="evidence" value="ECO:0007669"/>
    <property type="project" value="UniProtKB-UniRule"/>
</dbReference>
<dbReference type="GO" id="GO:0008270">
    <property type="term" value="F:zinc ion binding"/>
    <property type="evidence" value="ECO:0007669"/>
    <property type="project" value="UniProtKB-UniRule"/>
</dbReference>
<dbReference type="GO" id="GO:0006508">
    <property type="term" value="P:proteolysis"/>
    <property type="evidence" value="ECO:0007669"/>
    <property type="project" value="UniProtKB-KW"/>
</dbReference>
<dbReference type="CDD" id="cd20169">
    <property type="entry name" value="Peptidase_M90_mtfA"/>
    <property type="match status" value="1"/>
</dbReference>
<dbReference type="FunFam" id="1.10.472.150:FF:000001">
    <property type="entry name" value="Protein MtfA"/>
    <property type="match status" value="1"/>
</dbReference>
<dbReference type="FunFam" id="3.40.390.10:FF:000012">
    <property type="entry name" value="Protein MtfA"/>
    <property type="match status" value="1"/>
</dbReference>
<dbReference type="Gene3D" id="3.40.390.10">
    <property type="entry name" value="Collagenase (Catalytic Domain)"/>
    <property type="match status" value="1"/>
</dbReference>
<dbReference type="Gene3D" id="1.10.472.150">
    <property type="entry name" value="Glucose-regulated metallo-peptidase M90, N-terminal domain"/>
    <property type="match status" value="1"/>
</dbReference>
<dbReference type="HAMAP" id="MF_01593">
    <property type="entry name" value="MtfA"/>
    <property type="match status" value="1"/>
</dbReference>
<dbReference type="InterPro" id="IPR024079">
    <property type="entry name" value="MetalloPept_cat_dom_sf"/>
</dbReference>
<dbReference type="InterPro" id="IPR057256">
    <property type="entry name" value="MtfA_enterob"/>
</dbReference>
<dbReference type="InterPro" id="IPR010384">
    <property type="entry name" value="MtfA_fam"/>
</dbReference>
<dbReference type="InterPro" id="IPR042252">
    <property type="entry name" value="MtfA_N"/>
</dbReference>
<dbReference type="NCBIfam" id="NF011939">
    <property type="entry name" value="PRK15410.1"/>
    <property type="match status" value="1"/>
</dbReference>
<dbReference type="PANTHER" id="PTHR30164">
    <property type="entry name" value="MTFA PEPTIDASE"/>
    <property type="match status" value="1"/>
</dbReference>
<dbReference type="PANTHER" id="PTHR30164:SF2">
    <property type="entry name" value="PROTEIN MTFA"/>
    <property type="match status" value="1"/>
</dbReference>
<dbReference type="Pfam" id="PF06167">
    <property type="entry name" value="Peptidase_M90"/>
    <property type="match status" value="1"/>
</dbReference>
<dbReference type="SUPFAM" id="SSF55486">
    <property type="entry name" value="Metalloproteases ('zincins'), catalytic domain"/>
    <property type="match status" value="1"/>
</dbReference>
<organism>
    <name type="scientific">Yersinia pseudotuberculosis serotype O:3 (strain YPIII)</name>
    <dbReference type="NCBI Taxonomy" id="502800"/>
    <lineage>
        <taxon>Bacteria</taxon>
        <taxon>Pseudomonadati</taxon>
        <taxon>Pseudomonadota</taxon>
        <taxon>Gammaproteobacteria</taxon>
        <taxon>Enterobacterales</taxon>
        <taxon>Yersiniaceae</taxon>
        <taxon>Yersinia</taxon>
    </lineage>
</organism>
<keyword id="KW-0031">Aminopeptidase</keyword>
<keyword id="KW-0963">Cytoplasm</keyword>
<keyword id="KW-0378">Hydrolase</keyword>
<keyword id="KW-0479">Metal-binding</keyword>
<keyword id="KW-0482">Metalloprotease</keyword>
<keyword id="KW-0645">Protease</keyword>
<keyword id="KW-0862">Zinc</keyword>
<accession>B1JPS4</accession>
<reference key="1">
    <citation type="submission" date="2008-02" db="EMBL/GenBank/DDBJ databases">
        <title>Complete sequence of Yersinia pseudotuberculosis YPIII.</title>
        <authorList>
            <consortium name="US DOE Joint Genome Institute"/>
            <person name="Copeland A."/>
            <person name="Lucas S."/>
            <person name="Lapidus A."/>
            <person name="Glavina del Rio T."/>
            <person name="Dalin E."/>
            <person name="Tice H."/>
            <person name="Bruce D."/>
            <person name="Goodwin L."/>
            <person name="Pitluck S."/>
            <person name="Munk A.C."/>
            <person name="Brettin T."/>
            <person name="Detter J.C."/>
            <person name="Han C."/>
            <person name="Tapia R."/>
            <person name="Schmutz J."/>
            <person name="Larimer F."/>
            <person name="Land M."/>
            <person name="Hauser L."/>
            <person name="Challacombe J.F."/>
            <person name="Green L."/>
            <person name="Lindler L.E."/>
            <person name="Nikolich M.P."/>
            <person name="Richardson P."/>
        </authorList>
    </citation>
    <scope>NUCLEOTIDE SEQUENCE [LARGE SCALE GENOMIC DNA]</scope>
    <source>
        <strain>YPIII</strain>
    </source>
</reference>
<evidence type="ECO:0000255" key="1">
    <source>
        <dbReference type="HAMAP-Rule" id="MF_01593"/>
    </source>
</evidence>
<sequence length="270" mass="30659">MIKWLWKANKPQAEMLAQWHEALNIPLLAPLNEPEQQRLVSVASQLLQQKRFIPLQGLILTPLMQARLALLFALPVMELGAKWLDGFHEVLIYPSPFIVAEDWQDDLGLVHSGQSVQSGQSWEQGPIVLNWQDIQDSFDLSGFNLVIHEAAHKLDMRNGGHSNGVPPIAMRDVAVWEHDLHHAMDNIQDEIDMVGVEGASMDAYAASNPAECFAVLSEYFFSAPELLEGRFPAVYQHFCRFYRQDPLARLKRWENSLADNPPPENTHSHR</sequence>